<comment type="function">
    <text evidence="1">Controls the transcription of genes involved in arginine and lysine metabolism.</text>
</comment>
<comment type="subunit">
    <text evidence="1">Homodimer.</text>
</comment>
<comment type="similarity">
    <text evidence="2">Belongs to the LysR transcriptional regulatory family.</text>
</comment>
<proteinExistence type="inferred from homology"/>
<name>ARGP_ECO7I</name>
<feature type="chain" id="PRO_1000127268" description="HTH-type transcriptional regulator ArgP">
    <location>
        <begin position="1"/>
        <end position="297"/>
    </location>
</feature>
<feature type="domain" description="HTH lysR-type" evidence="1">
    <location>
        <begin position="4"/>
        <end position="60"/>
    </location>
</feature>
<feature type="DNA-binding region" description="H-T-H motif" evidence="1">
    <location>
        <begin position="21"/>
        <end position="40"/>
    </location>
</feature>
<protein>
    <recommendedName>
        <fullName evidence="1">HTH-type transcriptional regulator ArgP</fullName>
    </recommendedName>
</protein>
<sequence length="297" mass="33502">MKRPDYRTLQALDAVIRERGFERAAQKLCITQSAVSQRIKQLENMFGQPLLVRTVPPRPTEQGQKLLALLRQVELLEEEWLGDEQTGSTPLLLSLAVNADSLATWLLPALAPVLADSPIRLNLQVEDETRTQERLRRGEVVGAVSIQHQALPSCLVDKLGALDYLFVSSKPFAEKYFPNGVTRSALLKAPVVAFDHLDDMHQAFLQQNFDLPPGSVPCHIVNSSEAFVQLARQGTTCCMIPHLQIEKELTSGELIDLTPGLFQRRMLYWHRFAPESRMMRKVTDALLDYGHKVLRQD</sequence>
<keyword id="KW-0238">DNA-binding</keyword>
<keyword id="KW-0804">Transcription</keyword>
<keyword id="KW-0805">Transcription regulation</keyword>
<accession>B7NHX5</accession>
<dbReference type="EMBL" id="CU928164">
    <property type="protein sequence ID" value="CAR19447.1"/>
    <property type="molecule type" value="Genomic_DNA"/>
</dbReference>
<dbReference type="RefSeq" id="WP_001301058.1">
    <property type="nucleotide sequence ID" value="NC_011750.1"/>
</dbReference>
<dbReference type="RefSeq" id="YP_002409251.1">
    <property type="nucleotide sequence ID" value="NC_011750.1"/>
</dbReference>
<dbReference type="SMR" id="B7NHX5"/>
<dbReference type="STRING" id="585057.ECIAI39_3330"/>
<dbReference type="KEGG" id="ect:ECIAI39_3330"/>
<dbReference type="PATRIC" id="fig|585057.6.peg.3456"/>
<dbReference type="HOGENOM" id="CLU_063829_0_0_6"/>
<dbReference type="Proteomes" id="UP000000749">
    <property type="component" value="Chromosome"/>
</dbReference>
<dbReference type="GO" id="GO:0003677">
    <property type="term" value="F:DNA binding"/>
    <property type="evidence" value="ECO:0007669"/>
    <property type="project" value="UniProtKB-UniRule"/>
</dbReference>
<dbReference type="GO" id="GO:0003700">
    <property type="term" value="F:DNA-binding transcription factor activity"/>
    <property type="evidence" value="ECO:0007669"/>
    <property type="project" value="UniProtKB-UniRule"/>
</dbReference>
<dbReference type="CDD" id="cd08428">
    <property type="entry name" value="PBP2_IciA_ArgP"/>
    <property type="match status" value="1"/>
</dbReference>
<dbReference type="FunFam" id="1.10.10.10:FF:000061">
    <property type="entry name" value="HTH-type transcriptional regulator ArgP"/>
    <property type="match status" value="1"/>
</dbReference>
<dbReference type="FunFam" id="3.40.190.290:FF:000002">
    <property type="entry name" value="HTH-type transcriptional regulator ArgP"/>
    <property type="match status" value="1"/>
</dbReference>
<dbReference type="Gene3D" id="3.40.190.290">
    <property type="match status" value="1"/>
</dbReference>
<dbReference type="Gene3D" id="1.10.10.10">
    <property type="entry name" value="Winged helix-like DNA-binding domain superfamily/Winged helix DNA-binding domain"/>
    <property type="match status" value="1"/>
</dbReference>
<dbReference type="HAMAP" id="MF_00513">
    <property type="entry name" value="HTH_type_ArgP"/>
    <property type="match status" value="1"/>
</dbReference>
<dbReference type="InterPro" id="IPR017685">
    <property type="entry name" value="ArgP"/>
</dbReference>
<dbReference type="InterPro" id="IPR023490">
    <property type="entry name" value="ArgP_gammaproteobact"/>
</dbReference>
<dbReference type="InterPro" id="IPR050176">
    <property type="entry name" value="LTTR"/>
</dbReference>
<dbReference type="InterPro" id="IPR005119">
    <property type="entry name" value="LysR_subst-bd"/>
</dbReference>
<dbReference type="InterPro" id="IPR000847">
    <property type="entry name" value="Tscrpt_reg_HTH_LysR"/>
</dbReference>
<dbReference type="InterPro" id="IPR036388">
    <property type="entry name" value="WH-like_DNA-bd_sf"/>
</dbReference>
<dbReference type="InterPro" id="IPR036390">
    <property type="entry name" value="WH_DNA-bd_sf"/>
</dbReference>
<dbReference type="NCBIfam" id="TIGR03298">
    <property type="entry name" value="argP"/>
    <property type="match status" value="1"/>
</dbReference>
<dbReference type="NCBIfam" id="NF002964">
    <property type="entry name" value="PRK03635.1"/>
    <property type="match status" value="1"/>
</dbReference>
<dbReference type="NCBIfam" id="NF009888">
    <property type="entry name" value="PRK13348.1"/>
    <property type="match status" value="1"/>
</dbReference>
<dbReference type="PANTHER" id="PTHR30579:SF2">
    <property type="entry name" value="HTH-TYPE TRANSCRIPTIONAL REGULATOR ARGP"/>
    <property type="match status" value="1"/>
</dbReference>
<dbReference type="PANTHER" id="PTHR30579">
    <property type="entry name" value="TRANSCRIPTIONAL REGULATOR"/>
    <property type="match status" value="1"/>
</dbReference>
<dbReference type="Pfam" id="PF00126">
    <property type="entry name" value="HTH_1"/>
    <property type="match status" value="1"/>
</dbReference>
<dbReference type="Pfam" id="PF03466">
    <property type="entry name" value="LysR_substrate"/>
    <property type="match status" value="1"/>
</dbReference>
<dbReference type="PRINTS" id="PR00039">
    <property type="entry name" value="HTHLYSR"/>
</dbReference>
<dbReference type="SUPFAM" id="SSF53850">
    <property type="entry name" value="Periplasmic binding protein-like II"/>
    <property type="match status" value="1"/>
</dbReference>
<dbReference type="SUPFAM" id="SSF46785">
    <property type="entry name" value="Winged helix' DNA-binding domain"/>
    <property type="match status" value="1"/>
</dbReference>
<dbReference type="PROSITE" id="PS50931">
    <property type="entry name" value="HTH_LYSR"/>
    <property type="match status" value="1"/>
</dbReference>
<reference key="1">
    <citation type="journal article" date="2009" name="PLoS Genet.">
        <title>Organised genome dynamics in the Escherichia coli species results in highly diverse adaptive paths.</title>
        <authorList>
            <person name="Touchon M."/>
            <person name="Hoede C."/>
            <person name="Tenaillon O."/>
            <person name="Barbe V."/>
            <person name="Baeriswyl S."/>
            <person name="Bidet P."/>
            <person name="Bingen E."/>
            <person name="Bonacorsi S."/>
            <person name="Bouchier C."/>
            <person name="Bouvet O."/>
            <person name="Calteau A."/>
            <person name="Chiapello H."/>
            <person name="Clermont O."/>
            <person name="Cruveiller S."/>
            <person name="Danchin A."/>
            <person name="Diard M."/>
            <person name="Dossat C."/>
            <person name="Karoui M.E."/>
            <person name="Frapy E."/>
            <person name="Garry L."/>
            <person name="Ghigo J.M."/>
            <person name="Gilles A.M."/>
            <person name="Johnson J."/>
            <person name="Le Bouguenec C."/>
            <person name="Lescat M."/>
            <person name="Mangenot S."/>
            <person name="Martinez-Jehanne V."/>
            <person name="Matic I."/>
            <person name="Nassif X."/>
            <person name="Oztas S."/>
            <person name="Petit M.A."/>
            <person name="Pichon C."/>
            <person name="Rouy Z."/>
            <person name="Ruf C.S."/>
            <person name="Schneider D."/>
            <person name="Tourret J."/>
            <person name="Vacherie B."/>
            <person name="Vallenet D."/>
            <person name="Medigue C."/>
            <person name="Rocha E.P.C."/>
            <person name="Denamur E."/>
        </authorList>
    </citation>
    <scope>NUCLEOTIDE SEQUENCE [LARGE SCALE GENOMIC DNA]</scope>
    <source>
        <strain>IAI39 / ExPEC</strain>
    </source>
</reference>
<gene>
    <name evidence="1" type="primary">argP</name>
    <name type="synonym">iciA</name>
    <name type="ordered locus">ECIAI39_3330</name>
</gene>
<organism>
    <name type="scientific">Escherichia coli O7:K1 (strain IAI39 / ExPEC)</name>
    <dbReference type="NCBI Taxonomy" id="585057"/>
    <lineage>
        <taxon>Bacteria</taxon>
        <taxon>Pseudomonadati</taxon>
        <taxon>Pseudomonadota</taxon>
        <taxon>Gammaproteobacteria</taxon>
        <taxon>Enterobacterales</taxon>
        <taxon>Enterobacteriaceae</taxon>
        <taxon>Escherichia</taxon>
    </lineage>
</organism>
<evidence type="ECO:0000255" key="1">
    <source>
        <dbReference type="HAMAP-Rule" id="MF_00513"/>
    </source>
</evidence>
<evidence type="ECO:0000305" key="2"/>